<gene>
    <name evidence="5" type="primary">RR21</name>
    <name evidence="6" type="ORF">OsI_10579</name>
</gene>
<proteinExistence type="inferred from homology"/>
<accession>A2XE31</accession>
<name>ORR21_ORYSI</name>
<comment type="function">
    <text evidence="1">Transcriptional activator that binds specific DNA sequence. Functions as a response regulator involved in His-to-Asp phosphorelay signal transduction system. Phosphorylation of the Asp residue in the receiver domain activates the ability of the protein to promote the transcription of target genes. May directly activate some type-A response regulators in response to cytokinins.</text>
</comment>
<comment type="subcellular location">
    <subcellularLocation>
        <location evidence="3">Nucleus</location>
    </subcellularLocation>
</comment>
<comment type="PTM">
    <text evidence="5">Two-component system major event consists of a His-to-Asp phosphorelay between a sensor histidine kinase (HK) and a response regulator (RR). In plants, the His-to-Asp phosphorelay involves an additional intermediate named Histidine-containing phosphotransfer protein (HPt). This multistep phosphorelay consists of a His-Asp-His-Asp sequential transfer of a phosphate group between first a His and an Asp of the HK protein, followed by the transfer to a conserved His of the HPt protein and finally the transfer to an Asp in the receiver domain of the RR protein.</text>
</comment>
<comment type="similarity">
    <text evidence="5">Belongs to the ARR family. Type-B subfamily.</text>
</comment>
<reference key="1">
    <citation type="journal article" date="2005" name="PLoS Biol.">
        <title>The genomes of Oryza sativa: a history of duplications.</title>
        <authorList>
            <person name="Yu J."/>
            <person name="Wang J."/>
            <person name="Lin W."/>
            <person name="Li S."/>
            <person name="Li H."/>
            <person name="Zhou J."/>
            <person name="Ni P."/>
            <person name="Dong W."/>
            <person name="Hu S."/>
            <person name="Zeng C."/>
            <person name="Zhang J."/>
            <person name="Zhang Y."/>
            <person name="Li R."/>
            <person name="Xu Z."/>
            <person name="Li S."/>
            <person name="Li X."/>
            <person name="Zheng H."/>
            <person name="Cong L."/>
            <person name="Lin L."/>
            <person name="Yin J."/>
            <person name="Geng J."/>
            <person name="Li G."/>
            <person name="Shi J."/>
            <person name="Liu J."/>
            <person name="Lv H."/>
            <person name="Li J."/>
            <person name="Wang J."/>
            <person name="Deng Y."/>
            <person name="Ran L."/>
            <person name="Shi X."/>
            <person name="Wang X."/>
            <person name="Wu Q."/>
            <person name="Li C."/>
            <person name="Ren X."/>
            <person name="Wang J."/>
            <person name="Wang X."/>
            <person name="Li D."/>
            <person name="Liu D."/>
            <person name="Zhang X."/>
            <person name="Ji Z."/>
            <person name="Zhao W."/>
            <person name="Sun Y."/>
            <person name="Zhang Z."/>
            <person name="Bao J."/>
            <person name="Han Y."/>
            <person name="Dong L."/>
            <person name="Ji J."/>
            <person name="Chen P."/>
            <person name="Wu S."/>
            <person name="Liu J."/>
            <person name="Xiao Y."/>
            <person name="Bu D."/>
            <person name="Tan J."/>
            <person name="Yang L."/>
            <person name="Ye C."/>
            <person name="Zhang J."/>
            <person name="Xu J."/>
            <person name="Zhou Y."/>
            <person name="Yu Y."/>
            <person name="Zhang B."/>
            <person name="Zhuang S."/>
            <person name="Wei H."/>
            <person name="Liu B."/>
            <person name="Lei M."/>
            <person name="Yu H."/>
            <person name="Li Y."/>
            <person name="Xu H."/>
            <person name="Wei S."/>
            <person name="He X."/>
            <person name="Fang L."/>
            <person name="Zhang Z."/>
            <person name="Zhang Y."/>
            <person name="Huang X."/>
            <person name="Su Z."/>
            <person name="Tong W."/>
            <person name="Li J."/>
            <person name="Tong Z."/>
            <person name="Li S."/>
            <person name="Ye J."/>
            <person name="Wang L."/>
            <person name="Fang L."/>
            <person name="Lei T."/>
            <person name="Chen C.-S."/>
            <person name="Chen H.-C."/>
            <person name="Xu Z."/>
            <person name="Li H."/>
            <person name="Huang H."/>
            <person name="Zhang F."/>
            <person name="Xu H."/>
            <person name="Li N."/>
            <person name="Zhao C."/>
            <person name="Li S."/>
            <person name="Dong L."/>
            <person name="Huang Y."/>
            <person name="Li L."/>
            <person name="Xi Y."/>
            <person name="Qi Q."/>
            <person name="Li W."/>
            <person name="Zhang B."/>
            <person name="Hu W."/>
            <person name="Zhang Y."/>
            <person name="Tian X."/>
            <person name="Jiao Y."/>
            <person name="Liang X."/>
            <person name="Jin J."/>
            <person name="Gao L."/>
            <person name="Zheng W."/>
            <person name="Hao B."/>
            <person name="Liu S.-M."/>
            <person name="Wang W."/>
            <person name="Yuan L."/>
            <person name="Cao M."/>
            <person name="McDermott J."/>
            <person name="Samudrala R."/>
            <person name="Wang J."/>
            <person name="Wong G.K.-S."/>
            <person name="Yang H."/>
        </authorList>
    </citation>
    <scope>NUCLEOTIDE SEQUENCE [LARGE SCALE GENOMIC DNA]</scope>
    <source>
        <strain>cv. 93-11</strain>
    </source>
</reference>
<dbReference type="EMBL" id="CM000128">
    <property type="protein sequence ID" value="EAY89091.1"/>
    <property type="molecule type" value="Genomic_DNA"/>
</dbReference>
<dbReference type="SMR" id="A2XE31"/>
<dbReference type="STRING" id="39946.A2XE31"/>
<dbReference type="EnsemblPlants" id="BGIOSGA012149-TA">
    <property type="protein sequence ID" value="BGIOSGA012149-PA"/>
    <property type="gene ID" value="BGIOSGA012149"/>
</dbReference>
<dbReference type="EnsemblPlants" id="OsGoSa_03g0009050.01">
    <property type="protein sequence ID" value="OsGoSa_03g0009050.01"/>
    <property type="gene ID" value="OsGoSa_03g0009050"/>
</dbReference>
<dbReference type="EnsemblPlants" id="OsGoSa_03g0009050.02">
    <property type="protein sequence ID" value="OsGoSa_03g0009050.02"/>
    <property type="gene ID" value="OsGoSa_03g0009050"/>
</dbReference>
<dbReference type="EnsemblPlants" id="OsGoSa_03g0009050.03">
    <property type="protein sequence ID" value="OsGoSa_03g0009050.03"/>
    <property type="gene ID" value="OsGoSa_03g0009050"/>
</dbReference>
<dbReference type="EnsemblPlants" id="OsIR64_03g0008950.01">
    <property type="protein sequence ID" value="OsIR64_03g0008950.01"/>
    <property type="gene ID" value="OsIR64_03g0008950"/>
</dbReference>
<dbReference type="EnsemblPlants" id="OsIR64_03g0008950.02">
    <property type="protein sequence ID" value="OsIR64_03g0008950.02"/>
    <property type="gene ID" value="OsIR64_03g0008950"/>
</dbReference>
<dbReference type="EnsemblPlants" id="OsIR64_03g0008950.03">
    <property type="protein sequence ID" value="OsIR64_03g0008950.03"/>
    <property type="gene ID" value="OsIR64_03g0008950"/>
</dbReference>
<dbReference type="EnsemblPlants" id="OsKYG_03g0009100.01">
    <property type="protein sequence ID" value="OsKYG_03g0009100.01"/>
    <property type="gene ID" value="OsKYG_03g0009100"/>
</dbReference>
<dbReference type="EnsemblPlants" id="OsKYG_03g0009100.02">
    <property type="protein sequence ID" value="OsKYG_03g0009100.02"/>
    <property type="gene ID" value="OsKYG_03g0009100"/>
</dbReference>
<dbReference type="EnsemblPlants" id="OsKYG_03g0009100.03">
    <property type="protein sequence ID" value="OsKYG_03g0009100.03"/>
    <property type="gene ID" value="OsKYG_03g0009100"/>
</dbReference>
<dbReference type="EnsemblPlants" id="OsLaMu_03g0009050.01">
    <property type="protein sequence ID" value="OsLaMu_03g0009050.01"/>
    <property type="gene ID" value="OsLaMu_03g0009050"/>
</dbReference>
<dbReference type="EnsemblPlants" id="OsLaMu_03g0009050.02">
    <property type="protein sequence ID" value="OsLaMu_03g0009050.02"/>
    <property type="gene ID" value="OsLaMu_03g0009050"/>
</dbReference>
<dbReference type="EnsemblPlants" id="OsLaMu_03g0009050.03">
    <property type="protein sequence ID" value="OsLaMu_03g0009050.03"/>
    <property type="gene ID" value="OsLaMu_03g0009050"/>
</dbReference>
<dbReference type="EnsemblPlants" id="OsLima_03g0009020.01">
    <property type="protein sequence ID" value="OsLima_03g0009020.01"/>
    <property type="gene ID" value="OsLima_03g0009020"/>
</dbReference>
<dbReference type="EnsemblPlants" id="OsLima_03g0009020.02">
    <property type="protein sequence ID" value="OsLima_03g0009020.02"/>
    <property type="gene ID" value="OsLima_03g0009020"/>
</dbReference>
<dbReference type="EnsemblPlants" id="OsLima_03g0009020.03">
    <property type="protein sequence ID" value="OsLima_03g0009020.03"/>
    <property type="gene ID" value="OsLima_03g0009020"/>
</dbReference>
<dbReference type="EnsemblPlants" id="OsLiXu_03g0009090.01">
    <property type="protein sequence ID" value="OsLiXu_03g0009090.01"/>
    <property type="gene ID" value="OsLiXu_03g0009090"/>
</dbReference>
<dbReference type="EnsemblPlants" id="OsLiXu_03g0009090.02">
    <property type="protein sequence ID" value="OsLiXu_03g0009090.02"/>
    <property type="gene ID" value="OsLiXu_03g0009090"/>
</dbReference>
<dbReference type="EnsemblPlants" id="OsLiXu_03g0009090.03">
    <property type="protein sequence ID" value="OsLiXu_03g0009090.03"/>
    <property type="gene ID" value="OsLiXu_03g0009090"/>
</dbReference>
<dbReference type="EnsemblPlants" id="OsMH63_03G008970_01">
    <property type="protein sequence ID" value="OsMH63_03G008970_01"/>
    <property type="gene ID" value="OsMH63_03G008970"/>
</dbReference>
<dbReference type="EnsemblPlants" id="OsMH63_03G008970_02">
    <property type="protein sequence ID" value="OsMH63_03G008970_02"/>
    <property type="gene ID" value="OsMH63_03G008970"/>
</dbReference>
<dbReference type="EnsemblPlants" id="OsMH63_03G008970_03">
    <property type="protein sequence ID" value="OsMH63_03G008970_03"/>
    <property type="gene ID" value="OsMH63_03G008970"/>
</dbReference>
<dbReference type="EnsemblPlants" id="OsPr106_03g0009010.01">
    <property type="protein sequence ID" value="OsPr106_03g0009010.01"/>
    <property type="gene ID" value="OsPr106_03g0009010"/>
</dbReference>
<dbReference type="EnsemblPlants" id="OsPr106_03g0009010.02">
    <property type="protein sequence ID" value="OsPr106_03g0009010.02"/>
    <property type="gene ID" value="OsPr106_03g0009010"/>
</dbReference>
<dbReference type="EnsemblPlants" id="OsPr106_03g0009010.03">
    <property type="protein sequence ID" value="OsPr106_03g0009010.03"/>
    <property type="gene ID" value="OsPr106_03g0009010"/>
</dbReference>
<dbReference type="EnsemblPlants" id="OsZS97_03G008870_01">
    <property type="protein sequence ID" value="OsZS97_03G008870_01"/>
    <property type="gene ID" value="OsZS97_03G008870"/>
</dbReference>
<dbReference type="EnsemblPlants" id="OsZS97_03G008870_02">
    <property type="protein sequence ID" value="OsZS97_03G008870_02"/>
    <property type="gene ID" value="OsZS97_03G008870"/>
</dbReference>
<dbReference type="EnsemblPlants" id="OsZS97_03G008870_03">
    <property type="protein sequence ID" value="OsZS97_03G008870_03"/>
    <property type="gene ID" value="OsZS97_03G008870"/>
</dbReference>
<dbReference type="Gramene" id="BGIOSGA012149-TA">
    <property type="protein sequence ID" value="BGIOSGA012149-PA"/>
    <property type="gene ID" value="BGIOSGA012149"/>
</dbReference>
<dbReference type="Gramene" id="OsGoSa_03g0009050.01">
    <property type="protein sequence ID" value="OsGoSa_03g0009050.01"/>
    <property type="gene ID" value="OsGoSa_03g0009050"/>
</dbReference>
<dbReference type="Gramene" id="OsGoSa_03g0009050.02">
    <property type="protein sequence ID" value="OsGoSa_03g0009050.02"/>
    <property type="gene ID" value="OsGoSa_03g0009050"/>
</dbReference>
<dbReference type="Gramene" id="OsGoSa_03g0009050.03">
    <property type="protein sequence ID" value="OsGoSa_03g0009050.03"/>
    <property type="gene ID" value="OsGoSa_03g0009050"/>
</dbReference>
<dbReference type="Gramene" id="OsIR64_03g0008950.01">
    <property type="protein sequence ID" value="OsIR64_03g0008950.01"/>
    <property type="gene ID" value="OsIR64_03g0008950"/>
</dbReference>
<dbReference type="Gramene" id="OsIR64_03g0008950.02">
    <property type="protein sequence ID" value="OsIR64_03g0008950.02"/>
    <property type="gene ID" value="OsIR64_03g0008950"/>
</dbReference>
<dbReference type="Gramene" id="OsIR64_03g0008950.03">
    <property type="protein sequence ID" value="OsIR64_03g0008950.03"/>
    <property type="gene ID" value="OsIR64_03g0008950"/>
</dbReference>
<dbReference type="Gramene" id="OsKYG_03g0009100.01">
    <property type="protein sequence ID" value="OsKYG_03g0009100.01"/>
    <property type="gene ID" value="OsKYG_03g0009100"/>
</dbReference>
<dbReference type="Gramene" id="OsKYG_03g0009100.02">
    <property type="protein sequence ID" value="OsKYG_03g0009100.02"/>
    <property type="gene ID" value="OsKYG_03g0009100"/>
</dbReference>
<dbReference type="Gramene" id="OsKYG_03g0009100.03">
    <property type="protein sequence ID" value="OsKYG_03g0009100.03"/>
    <property type="gene ID" value="OsKYG_03g0009100"/>
</dbReference>
<dbReference type="Gramene" id="OsLaMu_03g0009050.01">
    <property type="protein sequence ID" value="OsLaMu_03g0009050.01"/>
    <property type="gene ID" value="OsLaMu_03g0009050"/>
</dbReference>
<dbReference type="Gramene" id="OsLaMu_03g0009050.02">
    <property type="protein sequence ID" value="OsLaMu_03g0009050.02"/>
    <property type="gene ID" value="OsLaMu_03g0009050"/>
</dbReference>
<dbReference type="Gramene" id="OsLaMu_03g0009050.03">
    <property type="protein sequence ID" value="OsLaMu_03g0009050.03"/>
    <property type="gene ID" value="OsLaMu_03g0009050"/>
</dbReference>
<dbReference type="Gramene" id="OsLima_03g0009020.01">
    <property type="protein sequence ID" value="OsLima_03g0009020.01"/>
    <property type="gene ID" value="OsLima_03g0009020"/>
</dbReference>
<dbReference type="Gramene" id="OsLima_03g0009020.02">
    <property type="protein sequence ID" value="OsLima_03g0009020.02"/>
    <property type="gene ID" value="OsLima_03g0009020"/>
</dbReference>
<dbReference type="Gramene" id="OsLima_03g0009020.03">
    <property type="protein sequence ID" value="OsLima_03g0009020.03"/>
    <property type="gene ID" value="OsLima_03g0009020"/>
</dbReference>
<dbReference type="Gramene" id="OsLiXu_03g0009090.01">
    <property type="protein sequence ID" value="OsLiXu_03g0009090.01"/>
    <property type="gene ID" value="OsLiXu_03g0009090"/>
</dbReference>
<dbReference type="Gramene" id="OsLiXu_03g0009090.02">
    <property type="protein sequence ID" value="OsLiXu_03g0009090.02"/>
    <property type="gene ID" value="OsLiXu_03g0009090"/>
</dbReference>
<dbReference type="Gramene" id="OsLiXu_03g0009090.03">
    <property type="protein sequence ID" value="OsLiXu_03g0009090.03"/>
    <property type="gene ID" value="OsLiXu_03g0009090"/>
</dbReference>
<dbReference type="Gramene" id="OsMH63_03G008970_01">
    <property type="protein sequence ID" value="OsMH63_03G008970_01"/>
    <property type="gene ID" value="OsMH63_03G008970"/>
</dbReference>
<dbReference type="Gramene" id="OsMH63_03G008970_02">
    <property type="protein sequence ID" value="OsMH63_03G008970_02"/>
    <property type="gene ID" value="OsMH63_03G008970"/>
</dbReference>
<dbReference type="Gramene" id="OsMH63_03G008970_03">
    <property type="protein sequence ID" value="OsMH63_03G008970_03"/>
    <property type="gene ID" value="OsMH63_03G008970"/>
</dbReference>
<dbReference type="Gramene" id="OsPr106_03g0009010.01">
    <property type="protein sequence ID" value="OsPr106_03g0009010.01"/>
    <property type="gene ID" value="OsPr106_03g0009010"/>
</dbReference>
<dbReference type="Gramene" id="OsPr106_03g0009010.02">
    <property type="protein sequence ID" value="OsPr106_03g0009010.02"/>
    <property type="gene ID" value="OsPr106_03g0009010"/>
</dbReference>
<dbReference type="Gramene" id="OsPr106_03g0009010.03">
    <property type="protein sequence ID" value="OsPr106_03g0009010.03"/>
    <property type="gene ID" value="OsPr106_03g0009010"/>
</dbReference>
<dbReference type="Gramene" id="OsZS97_03G008870_01">
    <property type="protein sequence ID" value="OsZS97_03G008870_01"/>
    <property type="gene ID" value="OsZS97_03G008870"/>
</dbReference>
<dbReference type="Gramene" id="OsZS97_03G008870_02">
    <property type="protein sequence ID" value="OsZS97_03G008870_02"/>
    <property type="gene ID" value="OsZS97_03G008870"/>
</dbReference>
<dbReference type="Gramene" id="OsZS97_03G008870_03">
    <property type="protein sequence ID" value="OsZS97_03G008870_03"/>
    <property type="gene ID" value="OsZS97_03G008870"/>
</dbReference>
<dbReference type="HOGENOM" id="CLU_024359_1_1_1"/>
<dbReference type="OMA" id="IGQATTC"/>
<dbReference type="OrthoDB" id="60033at2759"/>
<dbReference type="Proteomes" id="UP000007015">
    <property type="component" value="Chromosome 3"/>
</dbReference>
<dbReference type="GO" id="GO:0005634">
    <property type="term" value="C:nucleus"/>
    <property type="evidence" value="ECO:0007669"/>
    <property type="project" value="UniProtKB-SubCell"/>
</dbReference>
<dbReference type="GO" id="GO:0003677">
    <property type="term" value="F:DNA binding"/>
    <property type="evidence" value="ECO:0007669"/>
    <property type="project" value="UniProtKB-KW"/>
</dbReference>
<dbReference type="GO" id="GO:0003700">
    <property type="term" value="F:DNA-binding transcription factor activity"/>
    <property type="evidence" value="ECO:0007669"/>
    <property type="project" value="InterPro"/>
</dbReference>
<dbReference type="GO" id="GO:0009736">
    <property type="term" value="P:cytokinin-activated signaling pathway"/>
    <property type="evidence" value="ECO:0007669"/>
    <property type="project" value="UniProtKB-KW"/>
</dbReference>
<dbReference type="GO" id="GO:0000160">
    <property type="term" value="P:phosphorelay signal transduction system"/>
    <property type="evidence" value="ECO:0007669"/>
    <property type="project" value="UniProtKB-KW"/>
</dbReference>
<dbReference type="CDD" id="cd17584">
    <property type="entry name" value="REC_typeB_ARR-like"/>
    <property type="match status" value="1"/>
</dbReference>
<dbReference type="FunFam" id="1.10.10.60:FF:000007">
    <property type="entry name" value="Two-component response regulator"/>
    <property type="match status" value="1"/>
</dbReference>
<dbReference type="FunFam" id="3.40.50.2300:FF:000132">
    <property type="entry name" value="Two-component response regulator"/>
    <property type="match status" value="1"/>
</dbReference>
<dbReference type="Gene3D" id="3.40.50.2300">
    <property type="match status" value="1"/>
</dbReference>
<dbReference type="Gene3D" id="1.10.10.60">
    <property type="entry name" value="Homeodomain-like"/>
    <property type="match status" value="1"/>
</dbReference>
<dbReference type="InterPro" id="IPR045279">
    <property type="entry name" value="ARR-like"/>
</dbReference>
<dbReference type="InterPro" id="IPR011006">
    <property type="entry name" value="CheY-like_superfamily"/>
</dbReference>
<dbReference type="InterPro" id="IPR009057">
    <property type="entry name" value="Homeodomain-like_sf"/>
</dbReference>
<dbReference type="InterPro" id="IPR017930">
    <property type="entry name" value="Myb_dom"/>
</dbReference>
<dbReference type="InterPro" id="IPR006447">
    <property type="entry name" value="Myb_dom_plants"/>
</dbReference>
<dbReference type="InterPro" id="IPR017053">
    <property type="entry name" value="Response_reg_B-typ_pln"/>
</dbReference>
<dbReference type="InterPro" id="IPR001005">
    <property type="entry name" value="SANT/Myb"/>
</dbReference>
<dbReference type="InterPro" id="IPR001789">
    <property type="entry name" value="Sig_transdc_resp-reg_receiver"/>
</dbReference>
<dbReference type="NCBIfam" id="TIGR01557">
    <property type="entry name" value="myb_SHAQKYF"/>
    <property type="match status" value="1"/>
</dbReference>
<dbReference type="PANTHER" id="PTHR43874">
    <property type="entry name" value="TWO-COMPONENT RESPONSE REGULATOR"/>
    <property type="match status" value="1"/>
</dbReference>
<dbReference type="PANTHER" id="PTHR43874:SF67">
    <property type="entry name" value="TWO-COMPONENT RESPONSE REGULATOR ARR2"/>
    <property type="match status" value="1"/>
</dbReference>
<dbReference type="Pfam" id="PF00249">
    <property type="entry name" value="Myb_DNA-binding"/>
    <property type="match status" value="1"/>
</dbReference>
<dbReference type="Pfam" id="PF00072">
    <property type="entry name" value="Response_reg"/>
    <property type="match status" value="1"/>
</dbReference>
<dbReference type="PIRSF" id="PIRSF036392">
    <property type="entry name" value="RR_ARR_type-B"/>
    <property type="match status" value="1"/>
</dbReference>
<dbReference type="SMART" id="SM00448">
    <property type="entry name" value="REC"/>
    <property type="match status" value="1"/>
</dbReference>
<dbReference type="SUPFAM" id="SSF52172">
    <property type="entry name" value="CheY-like"/>
    <property type="match status" value="1"/>
</dbReference>
<dbReference type="SUPFAM" id="SSF46689">
    <property type="entry name" value="Homeodomain-like"/>
    <property type="match status" value="1"/>
</dbReference>
<dbReference type="PROSITE" id="PS51294">
    <property type="entry name" value="HTH_MYB"/>
    <property type="match status" value="1"/>
</dbReference>
<dbReference type="PROSITE" id="PS50110">
    <property type="entry name" value="RESPONSE_REGULATORY"/>
    <property type="match status" value="1"/>
</dbReference>
<feature type="chain" id="PRO_0000433841" description="Two-component response regulator ORR21">
    <location>
        <begin position="1"/>
        <end position="691"/>
    </location>
</feature>
<feature type="domain" description="Response regulatory" evidence="2">
    <location>
        <begin position="17"/>
        <end position="132"/>
    </location>
</feature>
<feature type="DNA-binding region" description="Myb-like GARP" evidence="3">
    <location>
        <begin position="199"/>
        <end position="258"/>
    </location>
</feature>
<feature type="region of interest" description="Disordered" evidence="4">
    <location>
        <begin position="139"/>
        <end position="204"/>
    </location>
</feature>
<feature type="region of interest" description="Disordered" evidence="4">
    <location>
        <begin position="616"/>
        <end position="647"/>
    </location>
</feature>
<feature type="compositionally biased region" description="Basic and acidic residues" evidence="4">
    <location>
        <begin position="139"/>
        <end position="155"/>
    </location>
</feature>
<feature type="compositionally biased region" description="Low complexity" evidence="4">
    <location>
        <begin position="616"/>
        <end position="628"/>
    </location>
</feature>
<feature type="modified residue" description="4-aspartylphosphate" evidence="2">
    <location>
        <position position="68"/>
    </location>
</feature>
<sequence length="691" mass="73775">MAPVEDGGGVEFPVGMKVLVVDDDPTCLAVLKRMLLECRYDATTCSQATRALTMLRENRRGFDVIISDVHMPDMDGFRLLELVGLEMDLPVIMMSADSRTDIVMKGIKHGACDYLIKPVRMEELKNIWQHVIRKKFNENKEHEHSGSLDDTDRTRPTNNDNEYASSANDGAEGSWKSQKKKRDKDDDDGELESGDPSSTSKKPRVVWSVELHQQFVNAVNHLGIDKAVPKKILELMNVPGLTRENVASHLQKFRLYLKRIAQHHAGIANPFCPPASSGKVGSLGGLDFQALAASGQIPPQALAALQDELLGRPTNSLVLPGRDQSSLRLAAVKGNKPHGEREIAFGQPIYKCQNNAYGAFPQSSPAVGGMPSFSAWPNNKLGMADSTGTLGGMSNSQNSNIVLHELQQQPDAMLSGTLHSLDVKPSGIVMPSQSLNTFSASEGLSPNQNTLMIPAQSSGFLAAMPPSMKHEPVLATSQPSSSLLGGIDLVNQASTSQPLISAHGGGNLSGLVNRNPNVVPSQGISTFHTPNNPYLVSPNSMGVGSKQPPGVLKTENSDALNHSYGYLGGSNPPMDSGLLSSQSKNTQFGLLGQDDITGSWSPLPNVDSYGNTVGLSHPGSSSSSFQSSNVALGKLPDQGRGKNHGFVGKGTCIPSRFAVDEIESPTNNLSHSIGSSGDIMSPDIFGFSGQM</sequence>
<keyword id="KW-0010">Activator</keyword>
<keyword id="KW-0932">Cytokinin signaling pathway</keyword>
<keyword id="KW-0238">DNA-binding</keyword>
<keyword id="KW-0539">Nucleus</keyword>
<keyword id="KW-0597">Phosphoprotein</keyword>
<keyword id="KW-1185">Reference proteome</keyword>
<keyword id="KW-0804">Transcription</keyword>
<keyword id="KW-0805">Transcription regulation</keyword>
<keyword id="KW-0902">Two-component regulatory system</keyword>
<evidence type="ECO:0000250" key="1">
    <source>
        <dbReference type="UniProtKB" id="Q940D0"/>
    </source>
</evidence>
<evidence type="ECO:0000255" key="2">
    <source>
        <dbReference type="PROSITE-ProRule" id="PRU00169"/>
    </source>
</evidence>
<evidence type="ECO:0000255" key="3">
    <source>
        <dbReference type="PROSITE-ProRule" id="PRU00625"/>
    </source>
</evidence>
<evidence type="ECO:0000256" key="4">
    <source>
        <dbReference type="SAM" id="MobiDB-lite"/>
    </source>
</evidence>
<evidence type="ECO:0000305" key="5"/>
<evidence type="ECO:0000312" key="6">
    <source>
        <dbReference type="EMBL" id="EAY89091.1"/>
    </source>
</evidence>
<organism>
    <name type="scientific">Oryza sativa subsp. indica</name>
    <name type="common">Rice</name>
    <dbReference type="NCBI Taxonomy" id="39946"/>
    <lineage>
        <taxon>Eukaryota</taxon>
        <taxon>Viridiplantae</taxon>
        <taxon>Streptophyta</taxon>
        <taxon>Embryophyta</taxon>
        <taxon>Tracheophyta</taxon>
        <taxon>Spermatophyta</taxon>
        <taxon>Magnoliopsida</taxon>
        <taxon>Liliopsida</taxon>
        <taxon>Poales</taxon>
        <taxon>Poaceae</taxon>
        <taxon>BOP clade</taxon>
        <taxon>Oryzoideae</taxon>
        <taxon>Oryzeae</taxon>
        <taxon>Oryzinae</taxon>
        <taxon>Oryza</taxon>
        <taxon>Oryza sativa</taxon>
    </lineage>
</organism>
<protein>
    <recommendedName>
        <fullName evidence="5">Two-component response regulator ORR21</fullName>
    </recommendedName>
</protein>